<reference key="1">
    <citation type="journal article" date="2003" name="Science">
        <title>A genomic view of the human-Bacteroides thetaiotaomicron symbiosis.</title>
        <authorList>
            <person name="Xu J."/>
            <person name="Bjursell M.K."/>
            <person name="Himrod J."/>
            <person name="Deng S."/>
            <person name="Carmichael L.K."/>
            <person name="Chiang H.C."/>
            <person name="Hooper L.V."/>
            <person name="Gordon J.I."/>
        </authorList>
    </citation>
    <scope>NUCLEOTIDE SEQUENCE [LARGE SCALE GENOMIC DNA]</scope>
    <source>
        <strain>ATCC 29148 / DSM 2079 / JCM 5827 / CCUG 10774 / NCTC 10582 / VPI-5482 / E50</strain>
    </source>
</reference>
<keyword id="KW-0963">Cytoplasm</keyword>
<keyword id="KW-0342">GTP-binding</keyword>
<keyword id="KW-0378">Hydrolase</keyword>
<keyword id="KW-0479">Metal-binding</keyword>
<keyword id="KW-0547">Nucleotide-binding</keyword>
<keyword id="KW-1185">Reference proteome</keyword>
<keyword id="KW-0690">Ribosome biogenesis</keyword>
<keyword id="KW-0694">RNA-binding</keyword>
<keyword id="KW-0699">rRNA-binding</keyword>
<keyword id="KW-0862">Zinc</keyword>
<evidence type="ECO:0000255" key="1">
    <source>
        <dbReference type="HAMAP-Rule" id="MF_01820"/>
    </source>
</evidence>
<evidence type="ECO:0000255" key="2">
    <source>
        <dbReference type="PROSITE-ProRule" id="PRU01058"/>
    </source>
</evidence>
<proteinExistence type="inferred from homology"/>
<accession>Q8A5I9</accession>
<name>RSGA2_BACTN</name>
<protein>
    <recommendedName>
        <fullName evidence="1">Small ribosomal subunit biogenesis GTPase RsgA 2</fullName>
        <ecNumber evidence="1">3.6.1.-</ecNumber>
    </recommendedName>
</protein>
<sequence>MKGLVIKNTGSWYQVKTDDGQFIECKIKGNFRLKGIRSTNPVAVGDRVQIILNQEGTAFINEIEDRKNYIIRRSSNLSKQSHILAANLDQCMLVVTVNYPETSTIFIDRFLASAEAYRVPVKLVFNKVDAYNEDELRYLDALINLYTHIGYPCFKVSAKEGTGVDAIKKDLEGKITLFSGHSGVGKSTLINAILPGTKVKTGEISTYHNKGMHTTTFSEMFSVDGDGYIIDTPGIKGFGTFDMEEEEIGHYFPEIFKVSADCKYGNCTHRHEPGCAVREAVEKHLISESRYTSYLNMLEDKEEGKYRAAY</sequence>
<feature type="chain" id="PRO_0000171465" description="Small ribosomal subunit biogenesis GTPase RsgA 2">
    <location>
        <begin position="1"/>
        <end position="310"/>
    </location>
</feature>
<feature type="domain" description="CP-type G" evidence="2">
    <location>
        <begin position="77"/>
        <end position="238"/>
    </location>
</feature>
<feature type="binding site" evidence="1">
    <location>
        <begin position="126"/>
        <end position="129"/>
    </location>
    <ligand>
        <name>GTP</name>
        <dbReference type="ChEBI" id="CHEBI:37565"/>
    </ligand>
</feature>
<feature type="binding site" evidence="1">
    <location>
        <begin position="180"/>
        <end position="188"/>
    </location>
    <ligand>
        <name>GTP</name>
        <dbReference type="ChEBI" id="CHEBI:37565"/>
    </ligand>
</feature>
<feature type="binding site" evidence="1">
    <location>
        <position position="262"/>
    </location>
    <ligand>
        <name>Zn(2+)</name>
        <dbReference type="ChEBI" id="CHEBI:29105"/>
    </ligand>
</feature>
<feature type="binding site" evidence="1">
    <location>
        <position position="267"/>
    </location>
    <ligand>
        <name>Zn(2+)</name>
        <dbReference type="ChEBI" id="CHEBI:29105"/>
    </ligand>
</feature>
<feature type="binding site" evidence="1">
    <location>
        <position position="269"/>
    </location>
    <ligand>
        <name>Zn(2+)</name>
        <dbReference type="ChEBI" id="CHEBI:29105"/>
    </ligand>
</feature>
<feature type="binding site" evidence="1">
    <location>
        <position position="275"/>
    </location>
    <ligand>
        <name>Zn(2+)</name>
        <dbReference type="ChEBI" id="CHEBI:29105"/>
    </ligand>
</feature>
<dbReference type="EC" id="3.6.1.-" evidence="1"/>
<dbReference type="EMBL" id="AE015928">
    <property type="protein sequence ID" value="AAO77357.1"/>
    <property type="molecule type" value="Genomic_DNA"/>
</dbReference>
<dbReference type="RefSeq" id="NP_811163.1">
    <property type="nucleotide sequence ID" value="NC_004663.1"/>
</dbReference>
<dbReference type="RefSeq" id="WP_008764015.1">
    <property type="nucleotide sequence ID" value="NC_004663.1"/>
</dbReference>
<dbReference type="SMR" id="Q8A5I9"/>
<dbReference type="FunCoup" id="Q8A5I9">
    <property type="interactions" value="353"/>
</dbReference>
<dbReference type="STRING" id="226186.BT_2250"/>
<dbReference type="PaxDb" id="226186-BT_2250"/>
<dbReference type="EnsemblBacteria" id="AAO77357">
    <property type="protein sequence ID" value="AAO77357"/>
    <property type="gene ID" value="BT_2250"/>
</dbReference>
<dbReference type="GeneID" id="60923419"/>
<dbReference type="KEGG" id="bth:BT_2250"/>
<dbReference type="PATRIC" id="fig|226186.12.peg.2315"/>
<dbReference type="eggNOG" id="COG1162">
    <property type="taxonomic scope" value="Bacteria"/>
</dbReference>
<dbReference type="HOGENOM" id="CLU_033617_2_0_10"/>
<dbReference type="InParanoid" id="Q8A5I9"/>
<dbReference type="OrthoDB" id="9809485at2"/>
<dbReference type="Proteomes" id="UP000001414">
    <property type="component" value="Chromosome"/>
</dbReference>
<dbReference type="GO" id="GO:0005737">
    <property type="term" value="C:cytoplasm"/>
    <property type="evidence" value="ECO:0007669"/>
    <property type="project" value="UniProtKB-SubCell"/>
</dbReference>
<dbReference type="GO" id="GO:0005525">
    <property type="term" value="F:GTP binding"/>
    <property type="evidence" value="ECO:0007669"/>
    <property type="project" value="UniProtKB-UniRule"/>
</dbReference>
<dbReference type="GO" id="GO:0003924">
    <property type="term" value="F:GTPase activity"/>
    <property type="evidence" value="ECO:0007669"/>
    <property type="project" value="UniProtKB-UniRule"/>
</dbReference>
<dbReference type="GO" id="GO:0046872">
    <property type="term" value="F:metal ion binding"/>
    <property type="evidence" value="ECO:0007669"/>
    <property type="project" value="UniProtKB-KW"/>
</dbReference>
<dbReference type="GO" id="GO:0019843">
    <property type="term" value="F:rRNA binding"/>
    <property type="evidence" value="ECO:0007669"/>
    <property type="project" value="UniProtKB-KW"/>
</dbReference>
<dbReference type="GO" id="GO:0042274">
    <property type="term" value="P:ribosomal small subunit biogenesis"/>
    <property type="evidence" value="ECO:0007669"/>
    <property type="project" value="UniProtKB-UniRule"/>
</dbReference>
<dbReference type="CDD" id="cd04466">
    <property type="entry name" value="S1_YloQ_GTPase"/>
    <property type="match status" value="1"/>
</dbReference>
<dbReference type="CDD" id="cd01854">
    <property type="entry name" value="YjeQ_EngC"/>
    <property type="match status" value="1"/>
</dbReference>
<dbReference type="Gene3D" id="2.40.50.140">
    <property type="entry name" value="Nucleic acid-binding proteins"/>
    <property type="match status" value="1"/>
</dbReference>
<dbReference type="Gene3D" id="3.40.50.300">
    <property type="entry name" value="P-loop containing nucleotide triphosphate hydrolases"/>
    <property type="match status" value="1"/>
</dbReference>
<dbReference type="Gene3D" id="1.10.40.50">
    <property type="entry name" value="Probable gtpase engc, domain 3"/>
    <property type="match status" value="1"/>
</dbReference>
<dbReference type="HAMAP" id="MF_01820">
    <property type="entry name" value="GTPase_RsgA"/>
    <property type="match status" value="1"/>
</dbReference>
<dbReference type="InterPro" id="IPR030378">
    <property type="entry name" value="G_CP_dom"/>
</dbReference>
<dbReference type="InterPro" id="IPR012340">
    <property type="entry name" value="NA-bd_OB-fold"/>
</dbReference>
<dbReference type="InterPro" id="IPR027417">
    <property type="entry name" value="P-loop_NTPase"/>
</dbReference>
<dbReference type="InterPro" id="IPR004881">
    <property type="entry name" value="Ribosome_biogen_GTPase_RsgA"/>
</dbReference>
<dbReference type="InterPro" id="IPR010914">
    <property type="entry name" value="RsgA_GTPase_dom"/>
</dbReference>
<dbReference type="InterPro" id="IPR031944">
    <property type="entry name" value="RsgA_N"/>
</dbReference>
<dbReference type="NCBIfam" id="TIGR00157">
    <property type="entry name" value="ribosome small subunit-dependent GTPase A"/>
    <property type="match status" value="1"/>
</dbReference>
<dbReference type="PANTHER" id="PTHR32120">
    <property type="entry name" value="SMALL RIBOSOMAL SUBUNIT BIOGENESIS GTPASE RSGA"/>
    <property type="match status" value="1"/>
</dbReference>
<dbReference type="PANTHER" id="PTHR32120:SF11">
    <property type="entry name" value="SMALL RIBOSOMAL SUBUNIT BIOGENESIS GTPASE RSGA 1, MITOCHONDRIAL-RELATED"/>
    <property type="match status" value="1"/>
</dbReference>
<dbReference type="Pfam" id="PF03193">
    <property type="entry name" value="RsgA_GTPase"/>
    <property type="match status" value="1"/>
</dbReference>
<dbReference type="Pfam" id="PF16745">
    <property type="entry name" value="RsgA_N"/>
    <property type="match status" value="1"/>
</dbReference>
<dbReference type="SUPFAM" id="SSF50249">
    <property type="entry name" value="Nucleic acid-binding proteins"/>
    <property type="match status" value="1"/>
</dbReference>
<dbReference type="SUPFAM" id="SSF52540">
    <property type="entry name" value="P-loop containing nucleoside triphosphate hydrolases"/>
    <property type="match status" value="1"/>
</dbReference>
<dbReference type="PROSITE" id="PS50936">
    <property type="entry name" value="ENGC_GTPASE"/>
    <property type="match status" value="1"/>
</dbReference>
<dbReference type="PROSITE" id="PS51721">
    <property type="entry name" value="G_CP"/>
    <property type="match status" value="1"/>
</dbReference>
<gene>
    <name evidence="1" type="primary">rsgA2</name>
    <name type="ordered locus">BT_2250</name>
</gene>
<organism>
    <name type="scientific">Bacteroides thetaiotaomicron (strain ATCC 29148 / DSM 2079 / JCM 5827 / CCUG 10774 / NCTC 10582 / VPI-5482 / E50)</name>
    <dbReference type="NCBI Taxonomy" id="226186"/>
    <lineage>
        <taxon>Bacteria</taxon>
        <taxon>Pseudomonadati</taxon>
        <taxon>Bacteroidota</taxon>
        <taxon>Bacteroidia</taxon>
        <taxon>Bacteroidales</taxon>
        <taxon>Bacteroidaceae</taxon>
        <taxon>Bacteroides</taxon>
    </lineage>
</organism>
<comment type="function">
    <text evidence="1">One of several proteins that assist in the late maturation steps of the functional core of the 30S ribosomal subunit. Helps release RbfA from mature subunits. May play a role in the assembly of ribosomal proteins into the subunit. Circularly permuted GTPase that catalyzes slow GTP hydrolysis, GTPase activity is stimulated by the 30S ribosomal subunit.</text>
</comment>
<comment type="cofactor">
    <cofactor evidence="1">
        <name>Zn(2+)</name>
        <dbReference type="ChEBI" id="CHEBI:29105"/>
    </cofactor>
    <text evidence="1">Binds 1 zinc ion per subunit.</text>
</comment>
<comment type="subunit">
    <text evidence="1">Monomer. Associates with 30S ribosomal subunit, binds 16S rRNA.</text>
</comment>
<comment type="subcellular location">
    <subcellularLocation>
        <location evidence="1">Cytoplasm</location>
    </subcellularLocation>
</comment>
<comment type="similarity">
    <text evidence="1">Belongs to the TRAFAC class YlqF/YawG GTPase family. RsgA subfamily.</text>
</comment>